<proteinExistence type="predicted"/>
<sequence>MPWRPPAHSVPGREGQFYAATFHAHAAFCGCGGFIEHLNSIHPRFLGAGGPPPPPPALRRALPAPEGPGGPPQHAPPNPPPEGDHQPPRRGGGAGGAGDGHAGDGDAAEEYGPEDLDLLFAAAAEDDMSFKAPSSRHQTRGPGRRAKKRLRFSPGSPRQPRLGGESRRSPSPRRTSTPKRKRGATPQAAPAAKTTPASPQTRTPSPVRRRTQTEEGSPHRPPPYIAPPPIVEDLLFPNTQKKKKFSKFDWETEAQLAACFDRPMRFFPSDLPTYPWLPKKPTTQTTFRVSFQLKAPQ</sequence>
<keyword id="KW-1185">Reference proteome</keyword>
<feature type="chain" id="PRO_0000315343" description="Uncharacterized ORF2/4 protein">
    <location>
        <begin position="1"/>
        <end position="297"/>
    </location>
</feature>
<feature type="region of interest" description="Disordered" evidence="1">
    <location>
        <begin position="46"/>
        <end position="229"/>
    </location>
</feature>
<feature type="compositionally biased region" description="Pro residues" evidence="1">
    <location>
        <begin position="65"/>
        <end position="81"/>
    </location>
</feature>
<feature type="compositionally biased region" description="Gly residues" evidence="1">
    <location>
        <begin position="90"/>
        <end position="100"/>
    </location>
</feature>
<feature type="compositionally biased region" description="Acidic residues" evidence="1">
    <location>
        <begin position="106"/>
        <end position="117"/>
    </location>
</feature>
<feature type="compositionally biased region" description="Basic residues" evidence="1">
    <location>
        <begin position="137"/>
        <end position="151"/>
    </location>
</feature>
<feature type="compositionally biased region" description="Low complexity" evidence="1">
    <location>
        <begin position="184"/>
        <end position="201"/>
    </location>
</feature>
<feature type="compositionally biased region" description="Pro residues" evidence="1">
    <location>
        <begin position="219"/>
        <end position="229"/>
    </location>
</feature>
<protein>
    <recommendedName>
        <fullName>Uncharacterized ORF2/4 protein</fullName>
    </recommendedName>
</protein>
<reference key="1">
    <citation type="journal article" date="2002" name="Arch. Virol.">
        <title>Analysis of the entire genomes of thirteen TT virus variants classifiable into the fourth and fifth genetic groups, isolated from viremic infants.</title>
        <authorList>
            <person name="Peng Y.H."/>
            <person name="Nishizawa T."/>
            <person name="Takahashi M."/>
            <person name="Ishikawa T."/>
            <person name="Yoshikawa A."/>
            <person name="Okamoto H."/>
        </authorList>
    </citation>
    <scope>NUCLEOTIDE SEQUENCE [GENOMIC DNA]</scope>
</reference>
<reference key="2">
    <citation type="journal article" date="2007" name="Rev. Med. Virol.">
        <title>Torque teno virus (TTV): current status.</title>
        <authorList>
            <person name="Hino S."/>
            <person name="Miyata H."/>
        </authorList>
    </citation>
    <scope>REVIEW</scope>
</reference>
<organism>
    <name type="scientific">Torque teno virus (isolate Human/China/CT23F/2001)</name>
    <name type="common">TTV</name>
    <dbReference type="NCBI Taxonomy" id="687366"/>
    <lineage>
        <taxon>Viruses</taxon>
        <taxon>Viruses incertae sedis</taxon>
        <taxon>Anelloviridae</taxon>
        <taxon>Alphatorquevirus</taxon>
    </lineage>
</organism>
<dbReference type="EMBL" id="AB064595">
    <property type="protein sequence ID" value="BAB79307.1"/>
    <property type="molecule type" value="Genomic_DNA"/>
</dbReference>
<dbReference type="RefSeq" id="YP_003587842.1">
    <property type="nucleotide sequence ID" value="NC_014074.1"/>
</dbReference>
<dbReference type="KEGG" id="vg:9086597"/>
<dbReference type="OrthoDB" id="27758at10239"/>
<dbReference type="Proteomes" id="UP000007551">
    <property type="component" value="Genome"/>
</dbReference>
<dbReference type="InterPro" id="IPR004118">
    <property type="entry name" value="HEV_TT_vir_Orf2/Gyrovir_Vp2_N"/>
</dbReference>
<dbReference type="Pfam" id="PF02957">
    <property type="entry name" value="TT_ORF2-like"/>
    <property type="match status" value="1"/>
</dbReference>
<gene>
    <name type="ORF">ORF2/4</name>
</gene>
<name>ORF24_TTVV6</name>
<evidence type="ECO:0000256" key="1">
    <source>
        <dbReference type="SAM" id="MobiDB-lite"/>
    </source>
</evidence>
<organismHost>
    <name type="scientific">Homo sapiens</name>
    <name type="common">Human</name>
    <dbReference type="NCBI Taxonomy" id="9606"/>
</organismHost>
<accession>Q8V7J2</accession>